<accession>A8FII0</accession>
<dbReference type="EMBL" id="CP000813">
    <property type="protein sequence ID" value="ABV64047.2"/>
    <property type="molecule type" value="Genomic_DNA"/>
</dbReference>
<dbReference type="RefSeq" id="WP_003215259.1">
    <property type="nucleotide sequence ID" value="NZ_VEIS01000002.1"/>
</dbReference>
<dbReference type="SMR" id="A8FII0"/>
<dbReference type="STRING" id="315750.BPUM_3395"/>
<dbReference type="KEGG" id="bpu:BPUM_3395"/>
<dbReference type="eggNOG" id="COG4844">
    <property type="taxonomic scope" value="Bacteria"/>
</dbReference>
<dbReference type="HOGENOM" id="CLU_163820_0_0_9"/>
<dbReference type="OrthoDB" id="1645211at2"/>
<dbReference type="Proteomes" id="UP000001355">
    <property type="component" value="Chromosome"/>
</dbReference>
<dbReference type="HAMAP" id="MF_01863">
    <property type="entry name" value="UPF0741"/>
    <property type="match status" value="1"/>
</dbReference>
<dbReference type="InterPro" id="IPR009910">
    <property type="entry name" value="DUF1450"/>
</dbReference>
<dbReference type="InterPro" id="IPR020880">
    <property type="entry name" value="UPF0741"/>
</dbReference>
<dbReference type="Pfam" id="PF07293">
    <property type="entry name" value="DUF1450"/>
    <property type="match status" value="1"/>
</dbReference>
<evidence type="ECO:0000255" key="1">
    <source>
        <dbReference type="HAMAP-Rule" id="MF_01863"/>
    </source>
</evidence>
<gene>
    <name type="ordered locus">BPUM_3395</name>
</gene>
<organism>
    <name type="scientific">Bacillus pumilus (strain SAFR-032)</name>
    <dbReference type="NCBI Taxonomy" id="315750"/>
    <lineage>
        <taxon>Bacteria</taxon>
        <taxon>Bacillati</taxon>
        <taxon>Bacillota</taxon>
        <taxon>Bacilli</taxon>
        <taxon>Bacillales</taxon>
        <taxon>Bacillaceae</taxon>
        <taxon>Bacillus</taxon>
    </lineage>
</organism>
<name>Y3395_BACP2</name>
<feature type="chain" id="PRO_0000372737" description="UPF0741 protein BPUM_3395">
    <location>
        <begin position="1"/>
        <end position="73"/>
    </location>
</feature>
<protein>
    <recommendedName>
        <fullName evidence="1">UPF0741 protein BPUM_3395</fullName>
    </recommendedName>
</protein>
<comment type="similarity">
    <text evidence="1">Belongs to the UPF0741 family.</text>
</comment>
<proteinExistence type="inferred from homology"/>
<reference key="1">
    <citation type="journal article" date="2007" name="PLoS ONE">
        <title>Paradoxical DNA repair and peroxide resistance gene conservation in Bacillus pumilus SAFR-032.</title>
        <authorList>
            <person name="Gioia J."/>
            <person name="Yerrapragada S."/>
            <person name="Qin X."/>
            <person name="Jiang H."/>
            <person name="Igboeli O.C."/>
            <person name="Muzny D."/>
            <person name="Dugan-Rocha S."/>
            <person name="Ding Y."/>
            <person name="Hawes A."/>
            <person name="Liu W."/>
            <person name="Perez L."/>
            <person name="Kovar C."/>
            <person name="Dinh H."/>
            <person name="Lee S."/>
            <person name="Nazareth L."/>
            <person name="Blyth P."/>
            <person name="Holder M."/>
            <person name="Buhay C."/>
            <person name="Tirumalai M.R."/>
            <person name="Liu Y."/>
            <person name="Dasgupta I."/>
            <person name="Bokhetache L."/>
            <person name="Fujita M."/>
            <person name="Karouia F."/>
            <person name="Eswara Moorthy P."/>
            <person name="Siefert J."/>
            <person name="Uzman A."/>
            <person name="Buzumbo P."/>
            <person name="Verma A."/>
            <person name="Zwiya H."/>
            <person name="McWilliams B.D."/>
            <person name="Olowu A."/>
            <person name="Clinkenbeard K.D."/>
            <person name="Newcombe D."/>
            <person name="Golebiewski L."/>
            <person name="Petrosino J.F."/>
            <person name="Nicholson W.L."/>
            <person name="Fox G.E."/>
            <person name="Venkateswaran K."/>
            <person name="Highlander S.K."/>
            <person name="Weinstock G.M."/>
        </authorList>
    </citation>
    <scope>NUCLEOTIDE SEQUENCE [LARGE SCALE GENOMIC DNA]</scope>
    <source>
        <strain>SAFR-032</strain>
    </source>
</reference>
<reference key="2">
    <citation type="journal article" date="2016" name="PLoS ONE">
        <title>Bacillus pumilus SAFR-032 Genome Revisited: Sequence Update and Re-Annotation.</title>
        <authorList>
            <person name="Stepanov V.G."/>
            <person name="Tirumalai M.R."/>
            <person name="Montazari S."/>
            <person name="Checinska A."/>
            <person name="Venkateswaran K."/>
            <person name="Fox G.E."/>
        </authorList>
    </citation>
    <scope>SEQUENCE REVISION TO N-TERMINUS</scope>
    <source>
        <strain>SAFR-032</strain>
    </source>
</reference>
<sequence length="73" mass="8155">MANEFRVCDDCDATNLKTLLPRLKSVDPDAKIEIGCQSYCGPGRKKAFAFVNNRPLSAPTEDELLEKVQKKVK</sequence>